<evidence type="ECO:0000250" key="1"/>
<evidence type="ECO:0000255" key="2"/>
<evidence type="ECO:0000255" key="3">
    <source>
        <dbReference type="PROSITE-ProRule" id="PRU00539"/>
    </source>
</evidence>
<evidence type="ECO:0000255" key="4">
    <source>
        <dbReference type="PROSITE-ProRule" id="PRU01079"/>
    </source>
</evidence>
<evidence type="ECO:0000305" key="5"/>
<organism>
    <name type="scientific">Tobamovirus Ob</name>
    <dbReference type="NCBI Taxonomy" id="31749"/>
    <lineage>
        <taxon>Viruses</taxon>
        <taxon>Riboviria</taxon>
        <taxon>Orthornavirae</taxon>
        <taxon>Kitrinoviricota</taxon>
        <taxon>Alsuviricetes</taxon>
        <taxon>Martellivirales</taxon>
        <taxon>Virgaviridae</taxon>
        <taxon>Tobamovirus</taxon>
    </lineage>
</organism>
<comment type="function">
    <molecule>Replicase large subunit</molecule>
    <text>Is an RNA-dependent RNA polymerase active in viral RNA replication.</text>
</comment>
<comment type="function">
    <molecule>Replicase small subunit</molecule>
    <text evidence="1 5">Is a methyltransferase active in RNA capping and an RNA helicase. Methyltransferase displays a cytoplasmic capping enzyme activity. This function is necessary since all viral RNAs are synthesized in the cytoplasm, and host capping enzymes are restricted to the nucleus. Helicase region probably exhibits NTPase and RNA unwinding activities (Potential). It also acts as a suppressor of RNA-mediated gene silencing, also known as post-transcriptional gene silencing (PTGS), a mechanism of plant viral defense that limits the accumulation of viral RNAs. May mediate silencing suppression through either inhibition of HEN1-mediated siRNA or siRNA demethylation (By similarity).</text>
</comment>
<comment type="catalytic activity">
    <reaction evidence="3">
        <text>RNA(n) + a ribonucleoside 5'-triphosphate = RNA(n+1) + diphosphate</text>
        <dbReference type="Rhea" id="RHEA:21248"/>
        <dbReference type="Rhea" id="RHEA-COMP:14527"/>
        <dbReference type="Rhea" id="RHEA-COMP:17342"/>
        <dbReference type="ChEBI" id="CHEBI:33019"/>
        <dbReference type="ChEBI" id="CHEBI:61557"/>
        <dbReference type="ChEBI" id="CHEBI:140395"/>
        <dbReference type="EC" id="2.7.7.48"/>
    </reaction>
</comment>
<comment type="catalytic activity">
    <reaction>
        <text>ATP + H2O = ADP + phosphate + H(+)</text>
        <dbReference type="Rhea" id="RHEA:13065"/>
        <dbReference type="ChEBI" id="CHEBI:15377"/>
        <dbReference type="ChEBI" id="CHEBI:15378"/>
        <dbReference type="ChEBI" id="CHEBI:30616"/>
        <dbReference type="ChEBI" id="CHEBI:43474"/>
        <dbReference type="ChEBI" id="CHEBI:456216"/>
        <dbReference type="EC" id="3.6.4.13"/>
    </reaction>
</comment>
<comment type="subunit">
    <text evidence="1">Heterodimer of a large and a small subunit.</text>
</comment>
<comment type="miscellaneous">
    <text>This protein is translated as a fusion protein by episodic readthrough of a termination codon. When readthrough of the terminator codon TGA occurs between the codons for Ala-1115 and Gln-1117, this results in the addition of the RdRp region to the replicase.</text>
</comment>
<comment type="similarity">
    <text evidence="5">Belongs to the ssRNA positive-strand viruses RNA-directed RNA polymerase family.</text>
</comment>
<protein>
    <recommendedName>
        <fullName>Replicase large subunit</fullName>
        <ecNumber>2.1.1.-</ecNumber>
        <ecNumber>2.7.7.-</ecNumber>
        <ecNumber>2.7.7.48</ecNumber>
        <ecNumber>3.6.4.13</ecNumber>
    </recommendedName>
    <alternativeName>
        <fullName>183 kDa protein</fullName>
    </alternativeName>
    <alternativeName>
        <fullName>RNA-directed RNA polymerase</fullName>
    </alternativeName>
    <component>
        <recommendedName>
            <fullName>Replicase small subunit</fullName>
            <ecNumber>2.1.1.-</ecNumber>
            <ecNumber>2.7.7.-</ecNumber>
            <ecNumber>3.6.4.13</ecNumber>
        </recommendedName>
        <alternativeName>
            <fullName>126 kDa protein</fullName>
        </alternativeName>
        <alternativeName>
            <fullName>Methyltransferase/RNA helicase</fullName>
            <shortName>MT/HEL</shortName>
        </alternativeName>
    </component>
</protein>
<organismHost>
    <name type="scientific">Nicotiana tabacum</name>
    <name type="common">Common tobacco</name>
    <dbReference type="NCBI Taxonomy" id="4097"/>
</organismHost>
<proteinExistence type="inferred from homology"/>
<keyword id="KW-0067">ATP-binding</keyword>
<keyword id="KW-0347">Helicase</keyword>
<keyword id="KW-0945">Host-virus interaction</keyword>
<keyword id="KW-0378">Hydrolase</keyword>
<keyword id="KW-1090">Inhibition of host innate immune response by virus</keyword>
<keyword id="KW-0547">Nucleotide-binding</keyword>
<keyword id="KW-0548">Nucleotidyltransferase</keyword>
<keyword id="KW-1159">RNA suppression of termination</keyword>
<keyword id="KW-0696">RNA-directed RNA polymerase</keyword>
<keyword id="KW-0941">Suppressor of RNA silencing</keyword>
<keyword id="KW-0808">Transferase</keyword>
<keyword id="KW-0899">Viral immunoevasion</keyword>
<keyword id="KW-0693">Viral RNA replication</keyword>
<sequence>MAHIQQSMQGALLDTVRGQNSLVNDLAKRRLYDTAVEEFNAKDRRPKINFSKSINEEQTLIVSQAYPEFQITFYNTQLAVHSLAAGLRSLELEYLMMQVPYGSLTYDIGGNFAAHLFKGRDYVHCCMPNLDLRDIMRHENQKDSVATYLSRLKARNKVLPAFQQEAFQRYSERSDEVVCNNTFQCCESNRYSSGGRVYAISLHSLYDIPADELGAALLRKNVHTLYAAFHFAEELLLEVSTVELPTIGGIFSRDGDKINFCFSNESTLNYSHSYSNLLKYVCKTYFPASNRFVYMKEFLITRVNTWFCKFTKLDTYTLYRGVYHRGCDQQEFYSAMEDAWHYKKTLAMLNSERIVLEDHSSVNYWFPKMKDMVIVPLFDVSLETQKRTKKEVIVSKDFVYTVLNHIRTYQAKALTYNNVLSFVESIRSRVIINGVTARSEWDVDKALLQSMAMTFFLITKLSMLKDELLVSKFTLSAKSVHEHVWDEIKRGCGNMFPSLKESLLRKKLISGSAEELEIEVPDMYVTFHDRFVAEYKASVEMPTIDISKDLSEAESYYSALSELSVLENSKDFDLEKFSRMCAINCVNPDIAAKIVVAVLSNESGVTLPFKEPTEGNMAEAMKSGEKDEVLTLGSQTDNTDLTSKSMVISGSLPLCGIASEISCDTFVRNEEINSLEEYHMLAAESVISNKMASIVYSGPLQVQQMQNYVDSLAASLSATVSNLKKLVKDSSVGFQDSLSKVGVFDVRKKMWLIKPTLKNHSWGVVQKFDGKCFLALLSYHNELPICDADWSKVAVSNESMVYSDMAKLRVLRKSIGEMPISVSSAKVTLVDGVPGCGKTKEILRRVNFSEDLVLVPGKEAAAMIRKRANQSGNIVANNDNVKTVDSFLMNLGKGPVCQFKRLFVDEGLMLHPGCVYFLVKLSLCNEAFVFGDTQQIPYINRVQNFPFPQHFSKLIVDETEKRRTTLRCPVDVTHFLNQCYDGAVTTTSKTQRSVGLEVVGGAAVMNPVTKPLKGKIVTFTQSDKLTMLSRGYQDVNTVHEIQGETYEEVSLVRLTPTPIHIISRESPHVLVGLTRHTRCFKYYTVVLDPLVKLVRDLECVSNFLLDVYMVDSVSAXQLQVSGVYLAENLFVQAPKSGDAQDLQFYYDKCLPGNSTVLNEFDAVTMNCSDISLNVKDCVLDFSKSVPLPRDNTKVPMTPVIRTAAERPRSQGLLENLVAMIKRNFNSPELSGTVDMENTASVVADRFFDSYFLKDKLSGCSLGDSGGKNIIDRQALIRWMEKQEKSTIGQLADYDFVDLPAIDQYRHIIKSQPKQKLDLSIQSEYPSLQTIVYHSKKINALFGPIFSELTRQMLSAIDTSRYLFFTRKTPEQIEEFFSDLDAHQPMEVLELDVSKYDKSQNEFHCAVEYEIWKRLGIDEFLAEVWKQGHRKTTLKDYTAGIKTCLWYQRKSGDVTTFIGNTVIIAACMASMLPMEKVIKAAFCGDDSLVYLPKGCELPNIQSCANLMWNFEAKLFKKTYGYFCGRYVIHHDRGAIVYVDPLKIISKLGAKHITDKEHLEEFRISLADVSKSLNNCAYYAQLDEAVREVHKTAPPGSFVYKCIVKFLSNRVLFESLFF</sequence>
<accession>P90211</accession>
<accession>Q83484</accession>
<dbReference type="EC" id="2.1.1.-"/>
<dbReference type="EC" id="2.7.7.-"/>
<dbReference type="EC" id="2.7.7.48"/>
<dbReference type="EC" id="3.6.4.13"/>
<dbReference type="EMBL" id="D13438">
    <property type="protein sequence ID" value="BAA02700.1"/>
    <property type="molecule type" value="Genomic_RNA"/>
</dbReference>
<dbReference type="EMBL" id="D13438">
    <property type="protein sequence ID" value="BAA02701.1"/>
    <property type="molecule type" value="Genomic_RNA"/>
</dbReference>
<dbReference type="PIR" id="JQ2144">
    <property type="entry name" value="JQ2144"/>
</dbReference>
<dbReference type="RefSeq" id="NP_620841.1">
    <property type="nucleotide sequence ID" value="NC_003852.1"/>
</dbReference>
<dbReference type="RefSeq" id="NP_620842.1">
    <property type="nucleotide sequence ID" value="NC_003852.1"/>
</dbReference>
<dbReference type="IntAct" id="P90211">
    <property type="interactions" value="1"/>
</dbReference>
<dbReference type="GeneID" id="944437"/>
<dbReference type="GeneID" id="944438"/>
<dbReference type="KEGG" id="vg:944437"/>
<dbReference type="KEGG" id="vg:944438"/>
<dbReference type="OrthoDB" id="1460at10239"/>
<dbReference type="Proteomes" id="UP000008248">
    <property type="component" value="Genome"/>
</dbReference>
<dbReference type="GO" id="GO:0005524">
    <property type="term" value="F:ATP binding"/>
    <property type="evidence" value="ECO:0007669"/>
    <property type="project" value="UniProtKB-KW"/>
</dbReference>
<dbReference type="GO" id="GO:0016887">
    <property type="term" value="F:ATP hydrolysis activity"/>
    <property type="evidence" value="ECO:0007669"/>
    <property type="project" value="RHEA"/>
</dbReference>
<dbReference type="GO" id="GO:0008174">
    <property type="term" value="F:mRNA methyltransferase activity"/>
    <property type="evidence" value="ECO:0007669"/>
    <property type="project" value="InterPro"/>
</dbReference>
<dbReference type="GO" id="GO:0003723">
    <property type="term" value="F:RNA binding"/>
    <property type="evidence" value="ECO:0007669"/>
    <property type="project" value="InterPro"/>
</dbReference>
<dbReference type="GO" id="GO:0003724">
    <property type="term" value="F:RNA helicase activity"/>
    <property type="evidence" value="ECO:0007669"/>
    <property type="project" value="UniProtKB-EC"/>
</dbReference>
<dbReference type="GO" id="GO:0003968">
    <property type="term" value="F:RNA-directed RNA polymerase activity"/>
    <property type="evidence" value="ECO:0007669"/>
    <property type="project" value="UniProtKB-KW"/>
</dbReference>
<dbReference type="GO" id="GO:0006351">
    <property type="term" value="P:DNA-templated transcription"/>
    <property type="evidence" value="ECO:0007669"/>
    <property type="project" value="InterPro"/>
</dbReference>
<dbReference type="GO" id="GO:0016556">
    <property type="term" value="P:mRNA modification"/>
    <property type="evidence" value="ECO:0007669"/>
    <property type="project" value="InterPro"/>
</dbReference>
<dbReference type="GO" id="GO:0006396">
    <property type="term" value="P:RNA processing"/>
    <property type="evidence" value="ECO:0007669"/>
    <property type="project" value="InterPro"/>
</dbReference>
<dbReference type="GO" id="GO:0052170">
    <property type="term" value="P:symbiont-mediated suppression of host innate immune response"/>
    <property type="evidence" value="ECO:0007669"/>
    <property type="project" value="UniProtKB-KW"/>
</dbReference>
<dbReference type="GO" id="GO:0039694">
    <property type="term" value="P:viral RNA genome replication"/>
    <property type="evidence" value="ECO:0007669"/>
    <property type="project" value="InterPro"/>
</dbReference>
<dbReference type="CDD" id="cd23251">
    <property type="entry name" value="Virgaviridae_RdRp"/>
    <property type="match status" value="1"/>
</dbReference>
<dbReference type="Gene3D" id="3.30.450.420">
    <property type="match status" value="1"/>
</dbReference>
<dbReference type="Gene3D" id="3.40.50.300">
    <property type="entry name" value="P-loop containing nucleotide triphosphate hydrolases"/>
    <property type="match status" value="2"/>
</dbReference>
<dbReference type="InterPro" id="IPR027351">
    <property type="entry name" value="(+)RNA_virus_helicase_core_dom"/>
</dbReference>
<dbReference type="InterPro" id="IPR002588">
    <property type="entry name" value="Alphavirus-like_MT_dom"/>
</dbReference>
<dbReference type="InterPro" id="IPR043502">
    <property type="entry name" value="DNA/RNA_pol_sf"/>
</dbReference>
<dbReference type="InterPro" id="IPR027417">
    <property type="entry name" value="P-loop_NTPase"/>
</dbReference>
<dbReference type="InterPro" id="IPR001788">
    <property type="entry name" value="RNA-dep_RNA_pol_alsuvir"/>
</dbReference>
<dbReference type="InterPro" id="IPR007094">
    <property type="entry name" value="RNA-dir_pol_PSvirus"/>
</dbReference>
<dbReference type="InterPro" id="IPR047310">
    <property type="entry name" value="Virgaviridae_RdRp"/>
</dbReference>
<dbReference type="Pfam" id="PF00978">
    <property type="entry name" value="RdRP_2"/>
    <property type="match status" value="1"/>
</dbReference>
<dbReference type="Pfam" id="PF01443">
    <property type="entry name" value="Viral_helicase1"/>
    <property type="match status" value="1"/>
</dbReference>
<dbReference type="Pfam" id="PF01660">
    <property type="entry name" value="Vmethyltransf"/>
    <property type="match status" value="1"/>
</dbReference>
<dbReference type="SUPFAM" id="SSF56672">
    <property type="entry name" value="DNA/RNA polymerases"/>
    <property type="match status" value="1"/>
</dbReference>
<dbReference type="SUPFAM" id="SSF52540">
    <property type="entry name" value="P-loop containing nucleoside triphosphate hydrolases"/>
    <property type="match status" value="1"/>
</dbReference>
<dbReference type="PROSITE" id="PS51743">
    <property type="entry name" value="ALPHAVIRUS_MT"/>
    <property type="match status" value="1"/>
</dbReference>
<dbReference type="PROSITE" id="PS51657">
    <property type="entry name" value="PSRV_HELICASE"/>
    <property type="match status" value="1"/>
</dbReference>
<dbReference type="PROSITE" id="PS50507">
    <property type="entry name" value="RDRP_SSRNA_POS"/>
    <property type="match status" value="1"/>
</dbReference>
<name>RDRP_TMOB</name>
<reference key="1">
    <citation type="journal article" date="1993" name="J. Gen. Virol.">
        <title>Nucleotide sequence of tobamovirus Ob which can spread systemically in N gene tobacco.</title>
        <authorList>
            <person name="Ikeda R."/>
            <person name="Watanabe E."/>
            <person name="Watanabe Y."/>
            <person name="Okada Y."/>
        </authorList>
    </citation>
    <scope>NUCLEOTIDE SEQUENCE [GENOMIC RNA]</scope>
</reference>
<feature type="chain" id="PRO_0000041188" description="Replicase large subunit">
    <location>
        <begin position="1"/>
        <end position="1616"/>
    </location>
</feature>
<feature type="chain" id="PRO_0000041189" description="Replicase small subunit">
    <location>
        <begin position="1"/>
        <end position="1115"/>
    </location>
</feature>
<feature type="domain" description="Alphavirus-like MT" evidence="4">
    <location>
        <begin position="72"/>
        <end position="281"/>
    </location>
</feature>
<feature type="domain" description="(+)RNA virus helicase ATP-binding">
    <location>
        <begin position="800"/>
        <end position="962"/>
    </location>
</feature>
<feature type="domain" description="(+)RNA virus helicase C-terminal">
    <location>
        <begin position="963"/>
        <end position="1115"/>
    </location>
</feature>
<feature type="domain" description="RdRp catalytic" evidence="3">
    <location>
        <begin position="1385"/>
        <end position="1498"/>
    </location>
</feature>
<feature type="region of interest" description="Methyltransferase">
    <location>
        <begin position="50"/>
        <end position="466"/>
    </location>
</feature>
<feature type="region of interest" description="Helicase">
    <location>
        <begin position="828"/>
        <end position="1084"/>
    </location>
</feature>
<feature type="binding site" evidence="2">
    <location>
        <begin position="832"/>
        <end position="839"/>
    </location>
    <ligand>
        <name>ATP</name>
        <dbReference type="ChEBI" id="CHEBI:30616"/>
    </ligand>
</feature>